<gene>
    <name evidence="1" type="primary">metK</name>
    <name type="ordered locus">Bd0850</name>
</gene>
<sequence length="387" mass="41702">MKNYLFTSESVSEGHPDKMADQISDGILDAILAQDPKGRVACETLLTTGLVVVAGEITTSAKVNFSEVARDVVKRIGYDHSDKGFDYKTCGVMIAVGQQSPDIAVGVKETLSDNQGAGDQGLMFGYAVNETPELMPLSIAMSHKLVKDLAALRKANKVDWLRPDAKSQVTVQYENGIAKRIDAVVISTQHADSVSNSTIQEFITEELIKKSIPGNWIDSKTKFFINPTGRFVTGGPMGDAGLTGRKIIVDTYGGHGAHGGGAFSGKDPSKVDRSAAYASRHIAKNIVGAGLAERCLVQVAYAIGVAEPVSITVNDYGTSKVGPEVLEKAVRQVFDLRPARITKDLDLLRPIYSPTAAYGHFGRNEESFTWERLNKVDQLKDAVKTLA</sequence>
<protein>
    <recommendedName>
        <fullName evidence="1">S-adenosylmethionine synthase</fullName>
        <shortName evidence="1">AdoMet synthase</shortName>
        <ecNumber evidence="1">2.5.1.6</ecNumber>
    </recommendedName>
    <alternativeName>
        <fullName evidence="1">MAT</fullName>
    </alternativeName>
    <alternativeName>
        <fullName evidence="1">Methionine adenosyltransferase</fullName>
    </alternativeName>
</protein>
<evidence type="ECO:0000255" key="1">
    <source>
        <dbReference type="HAMAP-Rule" id="MF_00086"/>
    </source>
</evidence>
<organism>
    <name type="scientific">Bdellovibrio bacteriovorus (strain ATCC 15356 / DSM 50701 / NCIMB 9529 / HD100)</name>
    <dbReference type="NCBI Taxonomy" id="264462"/>
    <lineage>
        <taxon>Bacteria</taxon>
        <taxon>Pseudomonadati</taxon>
        <taxon>Bdellovibrionota</taxon>
        <taxon>Bdellovibrionia</taxon>
        <taxon>Bdellovibrionales</taxon>
        <taxon>Pseudobdellovibrionaceae</taxon>
        <taxon>Bdellovibrio</taxon>
    </lineage>
</organism>
<reference key="1">
    <citation type="journal article" date="2004" name="Science">
        <title>A predator unmasked: life cycle of Bdellovibrio bacteriovorus from a genomic perspective.</title>
        <authorList>
            <person name="Rendulic S."/>
            <person name="Jagtap P."/>
            <person name="Rosinus A."/>
            <person name="Eppinger M."/>
            <person name="Baar C."/>
            <person name="Lanz C."/>
            <person name="Keller H."/>
            <person name="Lambert C."/>
            <person name="Evans K.J."/>
            <person name="Goesmann A."/>
            <person name="Meyer F."/>
            <person name="Sockett R.E."/>
            <person name="Schuster S.C."/>
        </authorList>
    </citation>
    <scope>NUCLEOTIDE SEQUENCE [LARGE SCALE GENOMIC DNA]</scope>
    <source>
        <strain>ATCC 15356 / DSM 50701 / NCIMB 9529 / HD100</strain>
    </source>
</reference>
<feature type="chain" id="PRO_0000174494" description="S-adenosylmethionine synthase">
    <location>
        <begin position="1"/>
        <end position="387"/>
    </location>
</feature>
<feature type="region of interest" description="Flexible loop" evidence="1">
    <location>
        <begin position="99"/>
        <end position="109"/>
    </location>
</feature>
<feature type="binding site" description="in other chain" evidence="1">
    <location>
        <position position="15"/>
    </location>
    <ligand>
        <name>ATP</name>
        <dbReference type="ChEBI" id="CHEBI:30616"/>
        <note>ligand shared between two neighboring subunits</note>
    </ligand>
</feature>
<feature type="binding site" evidence="1">
    <location>
        <position position="17"/>
    </location>
    <ligand>
        <name>Mg(2+)</name>
        <dbReference type="ChEBI" id="CHEBI:18420"/>
    </ligand>
</feature>
<feature type="binding site" evidence="1">
    <location>
        <position position="43"/>
    </location>
    <ligand>
        <name>K(+)</name>
        <dbReference type="ChEBI" id="CHEBI:29103"/>
    </ligand>
</feature>
<feature type="binding site" description="in other chain" evidence="1">
    <location>
        <position position="56"/>
    </location>
    <ligand>
        <name>L-methionine</name>
        <dbReference type="ChEBI" id="CHEBI:57844"/>
        <note>ligand shared between two neighboring subunits</note>
    </ligand>
</feature>
<feature type="binding site" description="in other chain" evidence="1">
    <location>
        <position position="99"/>
    </location>
    <ligand>
        <name>L-methionine</name>
        <dbReference type="ChEBI" id="CHEBI:57844"/>
        <note>ligand shared between two neighboring subunits</note>
    </ligand>
</feature>
<feature type="binding site" description="in other chain" evidence="1">
    <location>
        <begin position="164"/>
        <end position="166"/>
    </location>
    <ligand>
        <name>ATP</name>
        <dbReference type="ChEBI" id="CHEBI:30616"/>
        <note>ligand shared between two neighboring subunits</note>
    </ligand>
</feature>
<feature type="binding site" description="in other chain" evidence="1">
    <location>
        <begin position="230"/>
        <end position="231"/>
    </location>
    <ligand>
        <name>ATP</name>
        <dbReference type="ChEBI" id="CHEBI:30616"/>
        <note>ligand shared between two neighboring subunits</note>
    </ligand>
</feature>
<feature type="binding site" evidence="1">
    <location>
        <position position="239"/>
    </location>
    <ligand>
        <name>ATP</name>
        <dbReference type="ChEBI" id="CHEBI:30616"/>
        <note>ligand shared between two neighboring subunits</note>
    </ligand>
</feature>
<feature type="binding site" evidence="1">
    <location>
        <position position="239"/>
    </location>
    <ligand>
        <name>L-methionine</name>
        <dbReference type="ChEBI" id="CHEBI:57844"/>
        <note>ligand shared between two neighboring subunits</note>
    </ligand>
</feature>
<feature type="binding site" description="in other chain" evidence="1">
    <location>
        <begin position="245"/>
        <end position="246"/>
    </location>
    <ligand>
        <name>ATP</name>
        <dbReference type="ChEBI" id="CHEBI:30616"/>
        <note>ligand shared between two neighboring subunits</note>
    </ligand>
</feature>
<feature type="binding site" evidence="1">
    <location>
        <position position="262"/>
    </location>
    <ligand>
        <name>ATP</name>
        <dbReference type="ChEBI" id="CHEBI:30616"/>
        <note>ligand shared between two neighboring subunits</note>
    </ligand>
</feature>
<feature type="binding site" evidence="1">
    <location>
        <position position="266"/>
    </location>
    <ligand>
        <name>ATP</name>
        <dbReference type="ChEBI" id="CHEBI:30616"/>
        <note>ligand shared between two neighboring subunits</note>
    </ligand>
</feature>
<feature type="binding site" description="in other chain" evidence="1">
    <location>
        <position position="270"/>
    </location>
    <ligand>
        <name>L-methionine</name>
        <dbReference type="ChEBI" id="CHEBI:57844"/>
        <note>ligand shared between two neighboring subunits</note>
    </ligand>
</feature>
<name>METK_BDEBA</name>
<accession>Q6MPK2</accession>
<dbReference type="EC" id="2.5.1.6" evidence="1"/>
<dbReference type="EMBL" id="BX842648">
    <property type="protein sequence ID" value="CAE78795.1"/>
    <property type="molecule type" value="Genomic_DNA"/>
</dbReference>
<dbReference type="RefSeq" id="WP_011163397.1">
    <property type="nucleotide sequence ID" value="NC_005363.1"/>
</dbReference>
<dbReference type="SMR" id="Q6MPK2"/>
<dbReference type="STRING" id="264462.Bd0850"/>
<dbReference type="GeneID" id="93011922"/>
<dbReference type="KEGG" id="bba:Bd0850"/>
<dbReference type="eggNOG" id="COG0192">
    <property type="taxonomic scope" value="Bacteria"/>
</dbReference>
<dbReference type="HOGENOM" id="CLU_041802_1_1_7"/>
<dbReference type="UniPathway" id="UPA00315">
    <property type="reaction ID" value="UER00080"/>
</dbReference>
<dbReference type="Proteomes" id="UP000008080">
    <property type="component" value="Chromosome"/>
</dbReference>
<dbReference type="GO" id="GO:0005737">
    <property type="term" value="C:cytoplasm"/>
    <property type="evidence" value="ECO:0007669"/>
    <property type="project" value="UniProtKB-SubCell"/>
</dbReference>
<dbReference type="GO" id="GO:0005524">
    <property type="term" value="F:ATP binding"/>
    <property type="evidence" value="ECO:0007669"/>
    <property type="project" value="UniProtKB-UniRule"/>
</dbReference>
<dbReference type="GO" id="GO:0000287">
    <property type="term" value="F:magnesium ion binding"/>
    <property type="evidence" value="ECO:0007669"/>
    <property type="project" value="UniProtKB-UniRule"/>
</dbReference>
<dbReference type="GO" id="GO:0004478">
    <property type="term" value="F:methionine adenosyltransferase activity"/>
    <property type="evidence" value="ECO:0007669"/>
    <property type="project" value="UniProtKB-UniRule"/>
</dbReference>
<dbReference type="GO" id="GO:0006730">
    <property type="term" value="P:one-carbon metabolic process"/>
    <property type="evidence" value="ECO:0007669"/>
    <property type="project" value="UniProtKB-KW"/>
</dbReference>
<dbReference type="GO" id="GO:0006556">
    <property type="term" value="P:S-adenosylmethionine biosynthetic process"/>
    <property type="evidence" value="ECO:0007669"/>
    <property type="project" value="UniProtKB-UniRule"/>
</dbReference>
<dbReference type="CDD" id="cd18079">
    <property type="entry name" value="S-AdoMet_synt"/>
    <property type="match status" value="1"/>
</dbReference>
<dbReference type="FunFam" id="3.30.300.10:FF:000003">
    <property type="entry name" value="S-adenosylmethionine synthase"/>
    <property type="match status" value="1"/>
</dbReference>
<dbReference type="FunFam" id="3.30.300.10:FF:000004">
    <property type="entry name" value="S-adenosylmethionine synthase"/>
    <property type="match status" value="1"/>
</dbReference>
<dbReference type="Gene3D" id="3.30.300.10">
    <property type="match status" value="3"/>
</dbReference>
<dbReference type="HAMAP" id="MF_00086">
    <property type="entry name" value="S_AdoMet_synth1"/>
    <property type="match status" value="1"/>
</dbReference>
<dbReference type="InterPro" id="IPR022631">
    <property type="entry name" value="ADOMET_SYNTHASE_CS"/>
</dbReference>
<dbReference type="InterPro" id="IPR022630">
    <property type="entry name" value="S-AdoMet_synt_C"/>
</dbReference>
<dbReference type="InterPro" id="IPR022629">
    <property type="entry name" value="S-AdoMet_synt_central"/>
</dbReference>
<dbReference type="InterPro" id="IPR022628">
    <property type="entry name" value="S-AdoMet_synt_N"/>
</dbReference>
<dbReference type="InterPro" id="IPR002133">
    <property type="entry name" value="S-AdoMet_synthetase"/>
</dbReference>
<dbReference type="InterPro" id="IPR022636">
    <property type="entry name" value="S-AdoMet_synthetase_sfam"/>
</dbReference>
<dbReference type="NCBIfam" id="TIGR01034">
    <property type="entry name" value="metK"/>
    <property type="match status" value="1"/>
</dbReference>
<dbReference type="PANTHER" id="PTHR11964">
    <property type="entry name" value="S-ADENOSYLMETHIONINE SYNTHETASE"/>
    <property type="match status" value="1"/>
</dbReference>
<dbReference type="Pfam" id="PF02773">
    <property type="entry name" value="S-AdoMet_synt_C"/>
    <property type="match status" value="1"/>
</dbReference>
<dbReference type="Pfam" id="PF02772">
    <property type="entry name" value="S-AdoMet_synt_M"/>
    <property type="match status" value="1"/>
</dbReference>
<dbReference type="Pfam" id="PF00438">
    <property type="entry name" value="S-AdoMet_synt_N"/>
    <property type="match status" value="1"/>
</dbReference>
<dbReference type="PIRSF" id="PIRSF000497">
    <property type="entry name" value="MAT"/>
    <property type="match status" value="1"/>
</dbReference>
<dbReference type="SUPFAM" id="SSF55973">
    <property type="entry name" value="S-adenosylmethionine synthetase"/>
    <property type="match status" value="3"/>
</dbReference>
<dbReference type="PROSITE" id="PS00376">
    <property type="entry name" value="ADOMET_SYNTHASE_1"/>
    <property type="match status" value="1"/>
</dbReference>
<dbReference type="PROSITE" id="PS00377">
    <property type="entry name" value="ADOMET_SYNTHASE_2"/>
    <property type="match status" value="1"/>
</dbReference>
<comment type="function">
    <text evidence="1">Catalyzes the formation of S-adenosylmethionine (AdoMet) from methionine and ATP. The overall synthetic reaction is composed of two sequential steps, AdoMet formation and the subsequent tripolyphosphate hydrolysis which occurs prior to release of AdoMet from the enzyme.</text>
</comment>
<comment type="catalytic activity">
    <reaction evidence="1">
        <text>L-methionine + ATP + H2O = S-adenosyl-L-methionine + phosphate + diphosphate</text>
        <dbReference type="Rhea" id="RHEA:21080"/>
        <dbReference type="ChEBI" id="CHEBI:15377"/>
        <dbReference type="ChEBI" id="CHEBI:30616"/>
        <dbReference type="ChEBI" id="CHEBI:33019"/>
        <dbReference type="ChEBI" id="CHEBI:43474"/>
        <dbReference type="ChEBI" id="CHEBI:57844"/>
        <dbReference type="ChEBI" id="CHEBI:59789"/>
        <dbReference type="EC" id="2.5.1.6"/>
    </reaction>
</comment>
<comment type="cofactor">
    <cofactor evidence="1">
        <name>Mg(2+)</name>
        <dbReference type="ChEBI" id="CHEBI:18420"/>
    </cofactor>
    <text evidence="1">Binds 2 divalent ions per subunit.</text>
</comment>
<comment type="cofactor">
    <cofactor evidence="1">
        <name>K(+)</name>
        <dbReference type="ChEBI" id="CHEBI:29103"/>
    </cofactor>
    <text evidence="1">Binds 1 potassium ion per subunit.</text>
</comment>
<comment type="pathway">
    <text evidence="1">Amino-acid biosynthesis; S-adenosyl-L-methionine biosynthesis; S-adenosyl-L-methionine from L-methionine: step 1/1.</text>
</comment>
<comment type="subunit">
    <text evidence="1">Homotetramer; dimer of dimers.</text>
</comment>
<comment type="subcellular location">
    <subcellularLocation>
        <location evidence="1">Cytoplasm</location>
    </subcellularLocation>
</comment>
<comment type="similarity">
    <text evidence="1">Belongs to the AdoMet synthase family.</text>
</comment>
<keyword id="KW-0067">ATP-binding</keyword>
<keyword id="KW-0963">Cytoplasm</keyword>
<keyword id="KW-0460">Magnesium</keyword>
<keyword id="KW-0479">Metal-binding</keyword>
<keyword id="KW-0547">Nucleotide-binding</keyword>
<keyword id="KW-0554">One-carbon metabolism</keyword>
<keyword id="KW-0630">Potassium</keyword>
<keyword id="KW-1185">Reference proteome</keyword>
<keyword id="KW-0808">Transferase</keyword>
<proteinExistence type="inferred from homology"/>